<sequence>MHRTLLFLTWLISLTKAFNIKLPHTEKKDHLESNAVLACASYINTLKWSFDSSVVPGFYSTICSYSPAFDTWSLCIFNSLTDQIIPMDNTSFEESLGNVRKTCSFVDKKFSNISLEQYYSSLNNASSHALEDYGSIESLSTSIRVDRETRSRWIRAFHAHAYNLDISSVYGAYLTYYFVIVGIIAVFFHMSHYNGLNRALFASRFVNYIRGHFVLPTFLVDKHANHFKFLNVEVFTGLMPNSLEAWIIFGYTLANIIFLSISYIIDPYNLIFNSHLSQFTRLLADRSGILAFTQFPLIIIFTARNSFLEFLTGVKFNSFISFHKWIGRIMVLNATIHSLSYSLFAIINHAFKISNKQLYWKFGIASITVLCVLLVLSLGIVRKRHYEFFLYTHIILALLFFYCCWQHVKIFNGWKEWIVVSLLIWGLEKLFRIWNILQFRFPKATLINLNTSNNPHDEMFKVIIPKYNRRWHSKPGQYCFIYFLHPLVFWQCHPFTIIDEGEKCVLVIKPKSGLTRFIYNHILQSLNGKLQLRVAIEGPYGPSNLHLDKFDHLLLLSGGTGLPGPLDHAIKLSRNPDKPKSIDLIMAIKNPSFLNGYKSEILELKNSRSHVNVQVYLTQKTAVTKAANARDQLIHFDDIMTELTSFAHIGNARPNFSNVIENAIKSTPPGDSLAVVCCGPPVLVDDVRNTVSQKLLGYPERIIEYFEEYQCW</sequence>
<accession>Q12473</accession>
<accession>D6VXV7</accession>
<comment type="function">
    <text evidence="7 8">Metalloreductase responsible for reducing vacuolar iron and copper prior to transport into the cytosol. Catalyzes the reduction of Fe(3+) to Fe(2+) and Cu(2+) to Cu(+), respectively, which can then be transported by the respective vacuolar efflux systems to the cytosol.</text>
</comment>
<comment type="catalytic activity">
    <reaction>
        <text>2 a Fe(II)-siderophore + NADP(+) + H(+) = 2 a Fe(III)-siderophore + NADPH</text>
        <dbReference type="Rhea" id="RHEA:28795"/>
        <dbReference type="Rhea" id="RHEA-COMP:11342"/>
        <dbReference type="Rhea" id="RHEA-COMP:11344"/>
        <dbReference type="ChEBI" id="CHEBI:15378"/>
        <dbReference type="ChEBI" id="CHEBI:29033"/>
        <dbReference type="ChEBI" id="CHEBI:29034"/>
        <dbReference type="ChEBI" id="CHEBI:57783"/>
        <dbReference type="ChEBI" id="CHEBI:58349"/>
        <dbReference type="EC" id="1.16.1.9"/>
    </reaction>
</comment>
<comment type="cofactor">
    <cofactor evidence="10">
        <name>FAD</name>
        <dbReference type="ChEBI" id="CHEBI:57692"/>
    </cofactor>
</comment>
<comment type="subcellular location">
    <subcellularLocation>
        <location evidence="5 7 8">Vacuole membrane</location>
        <topology evidence="5 7 8">Multi-pass membrane protein</topology>
    </subcellularLocation>
</comment>
<comment type="induction">
    <text evidence="4 6 9">By transcription factor AFT2 upon iron deprivation.</text>
</comment>
<comment type="similarity">
    <text evidence="10">Belongs to the ferric reductase (FRE) family.</text>
</comment>
<protein>
    <recommendedName>
        <fullName>Ferric reductase transmembrane component 6</fullName>
        <ecNumber>1.16.1.9</ecNumber>
    </recommendedName>
    <alternativeName>
        <fullName>Ferric-chelate reductase 6</fullName>
    </alternativeName>
</protein>
<organism>
    <name type="scientific">Saccharomyces cerevisiae (strain ATCC 204508 / S288c)</name>
    <name type="common">Baker's yeast</name>
    <dbReference type="NCBI Taxonomy" id="559292"/>
    <lineage>
        <taxon>Eukaryota</taxon>
        <taxon>Fungi</taxon>
        <taxon>Dikarya</taxon>
        <taxon>Ascomycota</taxon>
        <taxon>Saccharomycotina</taxon>
        <taxon>Saccharomycetes</taxon>
        <taxon>Saccharomycetales</taxon>
        <taxon>Saccharomycetaceae</taxon>
        <taxon>Saccharomyces</taxon>
    </lineage>
</organism>
<gene>
    <name type="primary">FRE6</name>
    <name type="ordered locus">YLL051C</name>
    <name type="ORF">L0593</name>
</gene>
<evidence type="ECO:0000250" key="1"/>
<evidence type="ECO:0000255" key="2"/>
<evidence type="ECO:0000255" key="3">
    <source>
        <dbReference type="PROSITE-ProRule" id="PRU00716"/>
    </source>
</evidence>
<evidence type="ECO:0000269" key="4">
    <source>
    </source>
</evidence>
<evidence type="ECO:0000269" key="5">
    <source>
    </source>
</evidence>
<evidence type="ECO:0000269" key="6">
    <source>
    </source>
</evidence>
<evidence type="ECO:0000269" key="7">
    <source>
    </source>
</evidence>
<evidence type="ECO:0000269" key="8">
    <source>
    </source>
</evidence>
<evidence type="ECO:0000269" key="9">
    <source>
    </source>
</evidence>
<evidence type="ECO:0000305" key="10"/>
<feature type="signal peptide" evidence="2">
    <location>
        <begin position="1"/>
        <end position="17"/>
    </location>
</feature>
<feature type="chain" id="PRO_0000010142" description="Ferric reductase transmembrane component 6">
    <location>
        <begin position="18"/>
        <end position="712"/>
    </location>
</feature>
<feature type="topological domain" description="Vacuolar" evidence="2">
    <location>
        <begin position="18"/>
        <end position="167"/>
    </location>
</feature>
<feature type="transmembrane region" description="Helical; Name=1" evidence="2">
    <location>
        <begin position="168"/>
        <end position="188"/>
    </location>
</feature>
<feature type="topological domain" description="Cytoplasmic" evidence="2">
    <location>
        <begin position="189"/>
        <end position="244"/>
    </location>
</feature>
<feature type="transmembrane region" description="Helical; Name=2" evidence="2">
    <location>
        <begin position="245"/>
        <end position="265"/>
    </location>
</feature>
<feature type="topological domain" description="Vacuolar" evidence="2">
    <location>
        <begin position="266"/>
        <end position="287"/>
    </location>
</feature>
<feature type="transmembrane region" description="Helical; Name=3" evidence="2">
    <location>
        <begin position="288"/>
        <end position="308"/>
    </location>
</feature>
<feature type="topological domain" description="Cytoplasmic" evidence="2">
    <location>
        <begin position="309"/>
        <end position="328"/>
    </location>
</feature>
<feature type="transmembrane region" description="Helical; Name=4" evidence="2">
    <location>
        <begin position="329"/>
        <end position="349"/>
    </location>
</feature>
<feature type="topological domain" description="Vacuolar" evidence="2">
    <location>
        <begin position="350"/>
        <end position="360"/>
    </location>
</feature>
<feature type="transmembrane region" description="Helical; Name=5" evidence="2">
    <location>
        <begin position="361"/>
        <end position="381"/>
    </location>
</feature>
<feature type="topological domain" description="Cytoplasmic" evidence="2">
    <location>
        <begin position="382"/>
        <end position="387"/>
    </location>
</feature>
<feature type="transmembrane region" description="Helical; Name=6" evidence="2">
    <location>
        <begin position="388"/>
        <end position="408"/>
    </location>
</feature>
<feature type="topological domain" description="Vacuolar" evidence="2">
    <location>
        <begin position="409"/>
        <end position="416"/>
    </location>
</feature>
<feature type="transmembrane region" description="Helical; Name=7" evidence="2">
    <location>
        <begin position="417"/>
        <end position="437"/>
    </location>
</feature>
<feature type="topological domain" description="Cytoplasmic" evidence="2">
    <location>
        <begin position="438"/>
        <end position="712"/>
    </location>
</feature>
<feature type="domain" description="Ferric oxidoreductase">
    <location>
        <begin position="287"/>
        <end position="411"/>
    </location>
</feature>
<feature type="domain" description="FAD-binding FR-type" evidence="3">
    <location>
        <begin position="412"/>
        <end position="546"/>
    </location>
</feature>
<feature type="binding site" description="axial binding residue" evidence="1">
    <location>
        <position position="323"/>
    </location>
    <ligand>
        <name>heme</name>
        <dbReference type="ChEBI" id="CHEBI:30413"/>
        <label>1</label>
    </ligand>
    <ligandPart>
        <name>Fe</name>
        <dbReference type="ChEBI" id="CHEBI:18248"/>
    </ligandPart>
</feature>
<feature type="binding site" description="axial binding residue" evidence="1">
    <location>
        <position position="337"/>
    </location>
    <ligand>
        <name>heme</name>
        <dbReference type="ChEBI" id="CHEBI:30413"/>
        <label>2</label>
    </ligand>
    <ligandPart>
        <name>Fe</name>
        <dbReference type="ChEBI" id="CHEBI:18248"/>
    </ligandPart>
</feature>
<feature type="binding site" description="axial binding residue" evidence="1">
    <location>
        <position position="393"/>
    </location>
    <ligand>
        <name>heme</name>
        <dbReference type="ChEBI" id="CHEBI:30413"/>
        <label>1</label>
    </ligand>
    <ligandPart>
        <name>Fe</name>
        <dbReference type="ChEBI" id="CHEBI:18248"/>
    </ligandPart>
</feature>
<feature type="binding site" description="axial binding residue" evidence="1">
    <location>
        <position position="407"/>
    </location>
    <ligand>
        <name>heme</name>
        <dbReference type="ChEBI" id="CHEBI:30413"/>
        <label>2</label>
    </ligand>
    <ligandPart>
        <name>Fe</name>
        <dbReference type="ChEBI" id="CHEBI:18248"/>
    </ligandPart>
</feature>
<feature type="binding site" evidence="2">
    <location>
        <begin position="493"/>
        <end position="499"/>
    </location>
    <ligand>
        <name>FAD</name>
        <dbReference type="ChEBI" id="CHEBI:57692"/>
    </ligand>
</feature>
<feature type="binding site" evidence="2">
    <location>
        <begin position="538"/>
        <end position="541"/>
    </location>
    <ligand>
        <name>NADP(+)</name>
        <dbReference type="ChEBI" id="CHEBI:58349"/>
    </ligand>
</feature>
<feature type="binding site" evidence="2">
    <location>
        <begin position="678"/>
        <end position="679"/>
    </location>
    <ligand>
        <name>NADP(+)</name>
        <dbReference type="ChEBI" id="CHEBI:58349"/>
    </ligand>
</feature>
<feature type="glycosylation site" description="N-linked (GlcNAc...) asparagine" evidence="2">
    <location>
        <position position="89"/>
    </location>
</feature>
<feature type="glycosylation site" description="N-linked (GlcNAc...) asparagine" evidence="2">
    <location>
        <position position="112"/>
    </location>
</feature>
<feature type="glycosylation site" description="N-linked (GlcNAc...) asparagine" evidence="2">
    <location>
        <position position="124"/>
    </location>
</feature>
<feature type="mutagenesis site" description="Loss of function." evidence="7">
    <original>HPFT</original>
    <variation>AAAA</variation>
    <location>
        <begin position="493"/>
        <end position="496"/>
    </location>
</feature>
<reference key="1">
    <citation type="journal article" date="1997" name="Nature">
        <title>The nucleotide sequence of Saccharomyces cerevisiae chromosome XII.</title>
        <authorList>
            <person name="Johnston M."/>
            <person name="Hillier L.W."/>
            <person name="Riles L."/>
            <person name="Albermann K."/>
            <person name="Andre B."/>
            <person name="Ansorge W."/>
            <person name="Benes V."/>
            <person name="Brueckner M."/>
            <person name="Delius H."/>
            <person name="Dubois E."/>
            <person name="Duesterhoeft A."/>
            <person name="Entian K.-D."/>
            <person name="Floeth M."/>
            <person name="Goffeau A."/>
            <person name="Hebling U."/>
            <person name="Heumann K."/>
            <person name="Heuss-Neitzel D."/>
            <person name="Hilbert H."/>
            <person name="Hilger F."/>
            <person name="Kleine K."/>
            <person name="Koetter P."/>
            <person name="Louis E.J."/>
            <person name="Messenguy F."/>
            <person name="Mewes H.-W."/>
            <person name="Miosga T."/>
            <person name="Moestl D."/>
            <person name="Mueller-Auer S."/>
            <person name="Nentwich U."/>
            <person name="Obermaier B."/>
            <person name="Piravandi E."/>
            <person name="Pohl T.M."/>
            <person name="Portetelle D."/>
            <person name="Purnelle B."/>
            <person name="Rechmann S."/>
            <person name="Rieger M."/>
            <person name="Rinke M."/>
            <person name="Rose M."/>
            <person name="Scharfe M."/>
            <person name="Scherens B."/>
            <person name="Scholler P."/>
            <person name="Schwager C."/>
            <person name="Schwarz S."/>
            <person name="Underwood A.P."/>
            <person name="Urrestarazu L.A."/>
            <person name="Vandenbol M."/>
            <person name="Verhasselt P."/>
            <person name="Vierendeels F."/>
            <person name="Voet M."/>
            <person name="Volckaert G."/>
            <person name="Voss H."/>
            <person name="Wambutt R."/>
            <person name="Wedler E."/>
            <person name="Wedler H."/>
            <person name="Zimmermann F.K."/>
            <person name="Zollner A."/>
            <person name="Hani J."/>
            <person name="Hoheisel J.D."/>
        </authorList>
    </citation>
    <scope>NUCLEOTIDE SEQUENCE [LARGE SCALE GENOMIC DNA]</scope>
    <source>
        <strain>ATCC 204508 / S288c</strain>
    </source>
</reference>
<reference key="2">
    <citation type="journal article" date="2014" name="G3 (Bethesda)">
        <title>The reference genome sequence of Saccharomyces cerevisiae: Then and now.</title>
        <authorList>
            <person name="Engel S.R."/>
            <person name="Dietrich F.S."/>
            <person name="Fisk D.G."/>
            <person name="Binkley G."/>
            <person name="Balakrishnan R."/>
            <person name="Costanzo M.C."/>
            <person name="Dwight S.S."/>
            <person name="Hitz B.C."/>
            <person name="Karra K."/>
            <person name="Nash R.S."/>
            <person name="Weng S."/>
            <person name="Wong E.D."/>
            <person name="Lloyd P."/>
            <person name="Skrzypek M.S."/>
            <person name="Miyasato S.R."/>
            <person name="Simison M."/>
            <person name="Cherry J.M."/>
        </authorList>
    </citation>
    <scope>GENOME REANNOTATION</scope>
    <source>
        <strain>ATCC 204508 / S288c</strain>
    </source>
</reference>
<reference key="3">
    <citation type="journal article" date="1998" name="J. Biol. Chem.">
        <title>Metalloregulation of FRE1 and FRE2 homologs in Saccharomyces cerevisiae.</title>
        <authorList>
            <person name="Martins L.J."/>
            <person name="Jensen L.T."/>
            <person name="Simon J.R."/>
            <person name="Keller G.L."/>
            <person name="Winge D.R."/>
        </authorList>
    </citation>
    <scope>INDUCTION</scope>
</reference>
<reference key="4">
    <citation type="journal article" date="1998" name="J. Biol. Chem.">
        <authorList>
            <person name="Martins L.J."/>
            <person name="Jensen L.T."/>
            <person name="Simon J.R."/>
            <person name="Keller G.L."/>
            <person name="Winge D.R."/>
        </authorList>
    </citation>
    <scope>ERRATUM OF PUBMED:9726978</scope>
</reference>
<reference key="5">
    <citation type="journal article" date="1999" name="Yeast">
        <title>Regulated expression of the Saccharomyces cerevisiae Fre1p/Fre2p Fe/Cu reductase related genes.</title>
        <authorList>
            <person name="Georgatsou E."/>
            <person name="Alexandraki D."/>
        </authorList>
    </citation>
    <scope>INDUCTION</scope>
</reference>
<reference key="6">
    <citation type="journal article" date="2003" name="Nature">
        <title>Global analysis of protein localization in budding yeast.</title>
        <authorList>
            <person name="Huh W.-K."/>
            <person name="Falvo J.V."/>
            <person name="Gerke L.C."/>
            <person name="Carroll A.S."/>
            <person name="Howson R.W."/>
            <person name="Weissman J.S."/>
            <person name="O'Shea E.K."/>
        </authorList>
    </citation>
    <scope>SUBCELLULAR LOCATION [LARGE SCALE ANALYSIS]</scope>
</reference>
<reference key="7">
    <citation type="journal article" date="2005" name="Mol. Cell. Biol.">
        <title>Direct activation of genes involved in intracellular iron use by the yeast iron-responsive transcription factor Aft2 without its paralog Aft1.</title>
        <authorList>
            <person name="Courel M."/>
            <person name="Lallet S."/>
            <person name="Camadro J.-M."/>
            <person name="Blaiseau P.-L."/>
        </authorList>
    </citation>
    <scope>INDUCTION BY AFT2</scope>
</reference>
<reference key="8">
    <citation type="journal article" date="2006" name="Proc. Natl. Acad. Sci. U.S.A.">
        <title>A global topology map of the Saccharomyces cerevisiae membrane proteome.</title>
        <authorList>
            <person name="Kim H."/>
            <person name="Melen K."/>
            <person name="Oesterberg M."/>
            <person name="von Heijne G."/>
        </authorList>
    </citation>
    <scope>TOPOLOGY [LARGE SCALE ANALYSIS]</scope>
    <source>
        <strain>ATCC 208353 / W303-1A</strain>
    </source>
</reference>
<reference key="9">
    <citation type="journal article" date="2007" name="J. Biol. Chem.">
        <title>Identification of a vacuole-associated metalloreductase and its role in Ctr2-mediated intracellular copper mobilization.</title>
        <authorList>
            <person name="Rees E.M."/>
            <person name="Thiele D.J."/>
        </authorList>
    </citation>
    <scope>FUNCTION AS A REDUCTASE</scope>
    <scope>SUBCELLULAR LOCATION</scope>
    <scope>MUTAGENESIS OF 493-HIS--THR-496</scope>
</reference>
<reference key="10">
    <citation type="journal article" date="2007" name="J. Biol. Chem.">
        <title>The metalloreductase Fre6p in Fe-efflux from the yeast vacuole.</title>
        <authorList>
            <person name="Singh A."/>
            <person name="Kaur N."/>
            <person name="Kosman D.J."/>
        </authorList>
    </citation>
    <scope>FUNCTION AS A REDUCTASE ACTIVITY</scope>
    <scope>SUBCELLULAR LOCATION</scope>
</reference>
<proteinExistence type="evidence at protein level"/>
<name>FRE6_YEAST</name>
<keyword id="KW-0249">Electron transport</keyword>
<keyword id="KW-0274">FAD</keyword>
<keyword id="KW-0285">Flavoprotein</keyword>
<keyword id="KW-0325">Glycoprotein</keyword>
<keyword id="KW-0349">Heme</keyword>
<keyword id="KW-0406">Ion transport</keyword>
<keyword id="KW-0408">Iron</keyword>
<keyword id="KW-0410">Iron transport</keyword>
<keyword id="KW-0472">Membrane</keyword>
<keyword id="KW-0479">Metal-binding</keyword>
<keyword id="KW-0521">NADP</keyword>
<keyword id="KW-0560">Oxidoreductase</keyword>
<keyword id="KW-1185">Reference proteome</keyword>
<keyword id="KW-0732">Signal</keyword>
<keyword id="KW-0812">Transmembrane</keyword>
<keyword id="KW-1133">Transmembrane helix</keyword>
<keyword id="KW-0813">Transport</keyword>
<keyword id="KW-0926">Vacuole</keyword>
<dbReference type="EC" id="1.16.1.9"/>
<dbReference type="EMBL" id="Z47973">
    <property type="protein sequence ID" value="CAA88006.1"/>
    <property type="molecule type" value="Genomic_DNA"/>
</dbReference>
<dbReference type="EMBL" id="Z73156">
    <property type="protein sequence ID" value="CAA97503.1"/>
    <property type="molecule type" value="Genomic_DNA"/>
</dbReference>
<dbReference type="EMBL" id="BK006945">
    <property type="protein sequence ID" value="DAA09273.1"/>
    <property type="molecule type" value="Genomic_DNA"/>
</dbReference>
<dbReference type="PIR" id="S50969">
    <property type="entry name" value="S50969"/>
</dbReference>
<dbReference type="RefSeq" id="NP_013049.1">
    <property type="nucleotide sequence ID" value="NM_001181871.1"/>
</dbReference>
<dbReference type="SMR" id="Q12473"/>
<dbReference type="BioGRID" id="31264">
    <property type="interactions" value="32"/>
</dbReference>
<dbReference type="DIP" id="DIP-5019N"/>
<dbReference type="FunCoup" id="Q12473">
    <property type="interactions" value="432"/>
</dbReference>
<dbReference type="IntAct" id="Q12473">
    <property type="interactions" value="1"/>
</dbReference>
<dbReference type="STRING" id="4932.YLL051C"/>
<dbReference type="TCDB" id="5.B.1.5.2">
    <property type="family name" value="the phagocyte (gp91(phox)) nadph oxidase family"/>
</dbReference>
<dbReference type="GlyCosmos" id="Q12473">
    <property type="glycosylation" value="3 sites, No reported glycans"/>
</dbReference>
<dbReference type="GlyGen" id="Q12473">
    <property type="glycosylation" value="3 sites"/>
</dbReference>
<dbReference type="iPTMnet" id="Q12473"/>
<dbReference type="PaxDb" id="4932-YLL051C"/>
<dbReference type="PeptideAtlas" id="Q12473"/>
<dbReference type="EnsemblFungi" id="YLL051C_mRNA">
    <property type="protein sequence ID" value="YLL051C"/>
    <property type="gene ID" value="YLL051C"/>
</dbReference>
<dbReference type="GeneID" id="850675"/>
<dbReference type="KEGG" id="sce:YLL051C"/>
<dbReference type="AGR" id="SGD:S000003974"/>
<dbReference type="SGD" id="S000003974">
    <property type="gene designation" value="FRE6"/>
</dbReference>
<dbReference type="VEuPathDB" id="FungiDB:YLL051C"/>
<dbReference type="eggNOG" id="KOG0039">
    <property type="taxonomic scope" value="Eukaryota"/>
</dbReference>
<dbReference type="GeneTree" id="ENSGT00940000176303"/>
<dbReference type="HOGENOM" id="CLU_010365_4_0_1"/>
<dbReference type="InParanoid" id="Q12473"/>
<dbReference type="OMA" id="GWYMYYF"/>
<dbReference type="OrthoDB" id="4494341at2759"/>
<dbReference type="BioCyc" id="YEAST:G3O-32150-MONOMER"/>
<dbReference type="BioGRID-ORCS" id="850675">
    <property type="hits" value="1 hit in 10 CRISPR screens"/>
</dbReference>
<dbReference type="PRO" id="PR:Q12473"/>
<dbReference type="Proteomes" id="UP000002311">
    <property type="component" value="Chromosome XII"/>
</dbReference>
<dbReference type="RNAct" id="Q12473">
    <property type="molecule type" value="protein"/>
</dbReference>
<dbReference type="GO" id="GO:0000324">
    <property type="term" value="C:fungal-type vacuole"/>
    <property type="evidence" value="ECO:0007005"/>
    <property type="project" value="SGD"/>
</dbReference>
<dbReference type="GO" id="GO:0000329">
    <property type="term" value="C:fungal-type vacuole membrane"/>
    <property type="evidence" value="ECO:0000314"/>
    <property type="project" value="SGD"/>
</dbReference>
<dbReference type="GO" id="GO:0005886">
    <property type="term" value="C:plasma membrane"/>
    <property type="evidence" value="ECO:0000318"/>
    <property type="project" value="GO_Central"/>
</dbReference>
<dbReference type="GO" id="GO:0052851">
    <property type="term" value="F:ferric-chelate reductase (NADPH) activity"/>
    <property type="evidence" value="ECO:0007669"/>
    <property type="project" value="UniProtKB-EC"/>
</dbReference>
<dbReference type="GO" id="GO:0000293">
    <property type="term" value="F:ferric-chelate reductase activity"/>
    <property type="evidence" value="ECO:0000314"/>
    <property type="project" value="SGD"/>
</dbReference>
<dbReference type="GO" id="GO:0046872">
    <property type="term" value="F:metal ion binding"/>
    <property type="evidence" value="ECO:0007669"/>
    <property type="project" value="UniProtKB-KW"/>
</dbReference>
<dbReference type="GO" id="GO:0015677">
    <property type="term" value="P:copper ion import"/>
    <property type="evidence" value="ECO:0000316"/>
    <property type="project" value="SGD"/>
</dbReference>
<dbReference type="GO" id="GO:0006879">
    <property type="term" value="P:intracellular iron ion homeostasis"/>
    <property type="evidence" value="ECO:0000318"/>
    <property type="project" value="GO_Central"/>
</dbReference>
<dbReference type="GO" id="GO:0006826">
    <property type="term" value="P:iron ion transport"/>
    <property type="evidence" value="ECO:0000318"/>
    <property type="project" value="GO_Central"/>
</dbReference>
<dbReference type="CDD" id="cd06186">
    <property type="entry name" value="NOX_Duox_like_FAD_NADP"/>
    <property type="match status" value="1"/>
</dbReference>
<dbReference type="Gene3D" id="3.40.50.80">
    <property type="entry name" value="Nucleotide-binding domain of ferredoxin-NADP reductase (FNR) module"/>
    <property type="match status" value="1"/>
</dbReference>
<dbReference type="InterPro" id="IPR013112">
    <property type="entry name" value="FAD-bd_8"/>
</dbReference>
<dbReference type="InterPro" id="IPR017927">
    <property type="entry name" value="FAD-bd_FR_type"/>
</dbReference>
<dbReference type="InterPro" id="IPR013130">
    <property type="entry name" value="Fe3_Rdtase_TM_dom"/>
</dbReference>
<dbReference type="InterPro" id="IPR013121">
    <property type="entry name" value="Fe_red_NAD-bd_6"/>
</dbReference>
<dbReference type="InterPro" id="IPR051410">
    <property type="entry name" value="Ferric/Cupric_Reductase"/>
</dbReference>
<dbReference type="InterPro" id="IPR039261">
    <property type="entry name" value="FNR_nucleotide-bd"/>
</dbReference>
<dbReference type="PANTHER" id="PTHR32361:SF9">
    <property type="entry name" value="FERRIC REDUCTASE TRANSMEMBRANE COMPONENT 3-RELATED"/>
    <property type="match status" value="1"/>
</dbReference>
<dbReference type="PANTHER" id="PTHR32361">
    <property type="entry name" value="FERRIC/CUPRIC REDUCTASE TRANSMEMBRANE COMPONENT"/>
    <property type="match status" value="1"/>
</dbReference>
<dbReference type="Pfam" id="PF08022">
    <property type="entry name" value="FAD_binding_8"/>
    <property type="match status" value="1"/>
</dbReference>
<dbReference type="Pfam" id="PF01794">
    <property type="entry name" value="Ferric_reduct"/>
    <property type="match status" value="1"/>
</dbReference>
<dbReference type="Pfam" id="PF08030">
    <property type="entry name" value="NAD_binding_6"/>
    <property type="match status" value="1"/>
</dbReference>
<dbReference type="SFLD" id="SFLDS00052">
    <property type="entry name" value="Ferric_Reductase_Domain"/>
    <property type="match status" value="1"/>
</dbReference>
<dbReference type="SFLD" id="SFLDG01168">
    <property type="entry name" value="Ferric_reductase_subgroup_(FRE"/>
    <property type="match status" value="1"/>
</dbReference>
<dbReference type="SUPFAM" id="SSF52343">
    <property type="entry name" value="Ferredoxin reductase-like, C-terminal NADP-linked domain"/>
    <property type="match status" value="1"/>
</dbReference>
<dbReference type="PROSITE" id="PS51384">
    <property type="entry name" value="FAD_FR"/>
    <property type="match status" value="1"/>
</dbReference>